<accession>Q47W53</accession>
<sequence length="208" mass="22630">MSVFEIKHPLVQHKISLMRAKDMSTRSFRQLSAEVGSLLTYEATKDLELENFQMEGWDGEITGQRLVGKKATVVPILRAGIGMLDGVLELMPSAKISVVGLYRDEETLEPVTYFEKLAGDIDQRLALIIDPMLATGGSMNATIDILKKAGCNDIRALVLVAAPEGIEKVKSAHPDVDIYTASIDDHLNESGYIIPGLGDAGDKIFGTK</sequence>
<name>UPP_COLP3</name>
<organism>
    <name type="scientific">Colwellia psychrerythraea (strain 34H / ATCC BAA-681)</name>
    <name type="common">Vibrio psychroerythus</name>
    <dbReference type="NCBI Taxonomy" id="167879"/>
    <lineage>
        <taxon>Bacteria</taxon>
        <taxon>Pseudomonadati</taxon>
        <taxon>Pseudomonadota</taxon>
        <taxon>Gammaproteobacteria</taxon>
        <taxon>Alteromonadales</taxon>
        <taxon>Colwelliaceae</taxon>
        <taxon>Colwellia</taxon>
    </lineage>
</organism>
<keyword id="KW-0021">Allosteric enzyme</keyword>
<keyword id="KW-0328">Glycosyltransferase</keyword>
<keyword id="KW-0342">GTP-binding</keyword>
<keyword id="KW-0460">Magnesium</keyword>
<keyword id="KW-0547">Nucleotide-binding</keyword>
<keyword id="KW-0808">Transferase</keyword>
<gene>
    <name evidence="1" type="primary">upp</name>
    <name type="ordered locus">CPS_4319</name>
</gene>
<dbReference type="EC" id="2.4.2.9" evidence="1"/>
<dbReference type="EMBL" id="CP000083">
    <property type="protein sequence ID" value="AAZ27914.1"/>
    <property type="molecule type" value="Genomic_DNA"/>
</dbReference>
<dbReference type="RefSeq" id="WP_011045050.1">
    <property type="nucleotide sequence ID" value="NC_003910.7"/>
</dbReference>
<dbReference type="SMR" id="Q47W53"/>
<dbReference type="STRING" id="167879.CPS_4319"/>
<dbReference type="KEGG" id="cps:CPS_4319"/>
<dbReference type="eggNOG" id="COG0035">
    <property type="taxonomic scope" value="Bacteria"/>
</dbReference>
<dbReference type="HOGENOM" id="CLU_067096_2_2_6"/>
<dbReference type="UniPathway" id="UPA00574">
    <property type="reaction ID" value="UER00636"/>
</dbReference>
<dbReference type="Proteomes" id="UP000000547">
    <property type="component" value="Chromosome"/>
</dbReference>
<dbReference type="GO" id="GO:0005525">
    <property type="term" value="F:GTP binding"/>
    <property type="evidence" value="ECO:0007669"/>
    <property type="project" value="UniProtKB-KW"/>
</dbReference>
<dbReference type="GO" id="GO:0000287">
    <property type="term" value="F:magnesium ion binding"/>
    <property type="evidence" value="ECO:0007669"/>
    <property type="project" value="UniProtKB-UniRule"/>
</dbReference>
<dbReference type="GO" id="GO:0004845">
    <property type="term" value="F:uracil phosphoribosyltransferase activity"/>
    <property type="evidence" value="ECO:0007669"/>
    <property type="project" value="UniProtKB-UniRule"/>
</dbReference>
<dbReference type="GO" id="GO:0044206">
    <property type="term" value="P:UMP salvage"/>
    <property type="evidence" value="ECO:0007669"/>
    <property type="project" value="UniProtKB-UniRule"/>
</dbReference>
<dbReference type="GO" id="GO:0006223">
    <property type="term" value="P:uracil salvage"/>
    <property type="evidence" value="ECO:0007669"/>
    <property type="project" value="InterPro"/>
</dbReference>
<dbReference type="CDD" id="cd06223">
    <property type="entry name" value="PRTases_typeI"/>
    <property type="match status" value="1"/>
</dbReference>
<dbReference type="FunFam" id="3.40.50.2020:FF:000003">
    <property type="entry name" value="Uracil phosphoribosyltransferase"/>
    <property type="match status" value="1"/>
</dbReference>
<dbReference type="Gene3D" id="3.40.50.2020">
    <property type="match status" value="1"/>
</dbReference>
<dbReference type="HAMAP" id="MF_01218_B">
    <property type="entry name" value="Upp_B"/>
    <property type="match status" value="1"/>
</dbReference>
<dbReference type="InterPro" id="IPR000836">
    <property type="entry name" value="PRibTrfase_dom"/>
</dbReference>
<dbReference type="InterPro" id="IPR029057">
    <property type="entry name" value="PRTase-like"/>
</dbReference>
<dbReference type="InterPro" id="IPR034332">
    <property type="entry name" value="Upp_B"/>
</dbReference>
<dbReference type="InterPro" id="IPR050054">
    <property type="entry name" value="UPRTase/APRTase"/>
</dbReference>
<dbReference type="InterPro" id="IPR005765">
    <property type="entry name" value="Ura_phspho_trans"/>
</dbReference>
<dbReference type="NCBIfam" id="NF001097">
    <property type="entry name" value="PRK00129.1"/>
    <property type="match status" value="1"/>
</dbReference>
<dbReference type="NCBIfam" id="TIGR01091">
    <property type="entry name" value="upp"/>
    <property type="match status" value="1"/>
</dbReference>
<dbReference type="PANTHER" id="PTHR32315">
    <property type="entry name" value="ADENINE PHOSPHORIBOSYLTRANSFERASE"/>
    <property type="match status" value="1"/>
</dbReference>
<dbReference type="PANTHER" id="PTHR32315:SF4">
    <property type="entry name" value="URACIL PHOSPHORIBOSYLTRANSFERASE, CHLOROPLASTIC"/>
    <property type="match status" value="1"/>
</dbReference>
<dbReference type="Pfam" id="PF14681">
    <property type="entry name" value="UPRTase"/>
    <property type="match status" value="1"/>
</dbReference>
<dbReference type="SUPFAM" id="SSF53271">
    <property type="entry name" value="PRTase-like"/>
    <property type="match status" value="1"/>
</dbReference>
<proteinExistence type="inferred from homology"/>
<evidence type="ECO:0000255" key="1">
    <source>
        <dbReference type="HAMAP-Rule" id="MF_01218"/>
    </source>
</evidence>
<feature type="chain" id="PRO_1000053710" description="Uracil phosphoribosyltransferase">
    <location>
        <begin position="1"/>
        <end position="208"/>
    </location>
</feature>
<feature type="binding site" evidence="1">
    <location>
        <position position="78"/>
    </location>
    <ligand>
        <name>5-phospho-alpha-D-ribose 1-diphosphate</name>
        <dbReference type="ChEBI" id="CHEBI:58017"/>
    </ligand>
</feature>
<feature type="binding site" evidence="1">
    <location>
        <position position="103"/>
    </location>
    <ligand>
        <name>5-phospho-alpha-D-ribose 1-diphosphate</name>
        <dbReference type="ChEBI" id="CHEBI:58017"/>
    </ligand>
</feature>
<feature type="binding site" evidence="1">
    <location>
        <begin position="130"/>
        <end position="138"/>
    </location>
    <ligand>
        <name>5-phospho-alpha-D-ribose 1-diphosphate</name>
        <dbReference type="ChEBI" id="CHEBI:58017"/>
    </ligand>
</feature>
<feature type="binding site" evidence="1">
    <location>
        <position position="193"/>
    </location>
    <ligand>
        <name>uracil</name>
        <dbReference type="ChEBI" id="CHEBI:17568"/>
    </ligand>
</feature>
<feature type="binding site" evidence="1">
    <location>
        <begin position="198"/>
        <end position="200"/>
    </location>
    <ligand>
        <name>uracil</name>
        <dbReference type="ChEBI" id="CHEBI:17568"/>
    </ligand>
</feature>
<feature type="binding site" evidence="1">
    <location>
        <position position="199"/>
    </location>
    <ligand>
        <name>5-phospho-alpha-D-ribose 1-diphosphate</name>
        <dbReference type="ChEBI" id="CHEBI:58017"/>
    </ligand>
</feature>
<reference key="1">
    <citation type="journal article" date="2005" name="Proc. Natl. Acad. Sci. U.S.A.">
        <title>The psychrophilic lifestyle as revealed by the genome sequence of Colwellia psychrerythraea 34H through genomic and proteomic analyses.</title>
        <authorList>
            <person name="Methe B.A."/>
            <person name="Nelson K.E."/>
            <person name="Deming J.W."/>
            <person name="Momen B."/>
            <person name="Melamud E."/>
            <person name="Zhang X."/>
            <person name="Moult J."/>
            <person name="Madupu R."/>
            <person name="Nelson W.C."/>
            <person name="Dodson R.J."/>
            <person name="Brinkac L.M."/>
            <person name="Daugherty S.C."/>
            <person name="Durkin A.S."/>
            <person name="DeBoy R.T."/>
            <person name="Kolonay J.F."/>
            <person name="Sullivan S.A."/>
            <person name="Zhou L."/>
            <person name="Davidsen T.M."/>
            <person name="Wu M."/>
            <person name="Huston A.L."/>
            <person name="Lewis M."/>
            <person name="Weaver B."/>
            <person name="Weidman J.F."/>
            <person name="Khouri H."/>
            <person name="Utterback T.R."/>
            <person name="Feldblyum T.V."/>
            <person name="Fraser C.M."/>
        </authorList>
    </citation>
    <scope>NUCLEOTIDE SEQUENCE [LARGE SCALE GENOMIC DNA]</scope>
    <source>
        <strain>34H / ATCC BAA-681</strain>
    </source>
</reference>
<protein>
    <recommendedName>
        <fullName evidence="1">Uracil phosphoribosyltransferase</fullName>
        <ecNumber evidence="1">2.4.2.9</ecNumber>
    </recommendedName>
    <alternativeName>
        <fullName evidence="1">UMP pyrophosphorylase</fullName>
    </alternativeName>
    <alternativeName>
        <fullName evidence="1">UPRTase</fullName>
    </alternativeName>
</protein>
<comment type="function">
    <text evidence="1">Catalyzes the conversion of uracil and 5-phospho-alpha-D-ribose 1-diphosphate (PRPP) to UMP and diphosphate.</text>
</comment>
<comment type="catalytic activity">
    <reaction evidence="1">
        <text>UMP + diphosphate = 5-phospho-alpha-D-ribose 1-diphosphate + uracil</text>
        <dbReference type="Rhea" id="RHEA:13017"/>
        <dbReference type="ChEBI" id="CHEBI:17568"/>
        <dbReference type="ChEBI" id="CHEBI:33019"/>
        <dbReference type="ChEBI" id="CHEBI:57865"/>
        <dbReference type="ChEBI" id="CHEBI:58017"/>
        <dbReference type="EC" id="2.4.2.9"/>
    </reaction>
</comment>
<comment type="cofactor">
    <cofactor evidence="1">
        <name>Mg(2+)</name>
        <dbReference type="ChEBI" id="CHEBI:18420"/>
    </cofactor>
    <text evidence="1">Binds 1 Mg(2+) ion per subunit. The magnesium is bound as Mg-PRPP.</text>
</comment>
<comment type="activity regulation">
    <text evidence="1">Allosterically activated by GTP.</text>
</comment>
<comment type="pathway">
    <text evidence="1">Pyrimidine metabolism; UMP biosynthesis via salvage pathway; UMP from uracil: step 1/1.</text>
</comment>
<comment type="similarity">
    <text evidence="1">Belongs to the UPRTase family.</text>
</comment>